<comment type="function">
    <text evidence="1">Catalyzes the attachment of glutamate to tRNA(Glu) in a two-step reaction: glutamate is first activated by ATP to form Glu-AMP and then transferred to the acceptor end of tRNA(Glu).</text>
</comment>
<comment type="catalytic activity">
    <reaction evidence="1">
        <text>tRNA(Glu) + L-glutamate + ATP = L-glutamyl-tRNA(Glu) + AMP + diphosphate</text>
        <dbReference type="Rhea" id="RHEA:23540"/>
        <dbReference type="Rhea" id="RHEA-COMP:9663"/>
        <dbReference type="Rhea" id="RHEA-COMP:9680"/>
        <dbReference type="ChEBI" id="CHEBI:29985"/>
        <dbReference type="ChEBI" id="CHEBI:30616"/>
        <dbReference type="ChEBI" id="CHEBI:33019"/>
        <dbReference type="ChEBI" id="CHEBI:78442"/>
        <dbReference type="ChEBI" id="CHEBI:78520"/>
        <dbReference type="ChEBI" id="CHEBI:456215"/>
        <dbReference type="EC" id="6.1.1.17"/>
    </reaction>
</comment>
<comment type="subunit">
    <text evidence="1">Monomer.</text>
</comment>
<comment type="subcellular location">
    <subcellularLocation>
        <location evidence="1">Cytoplasm</location>
    </subcellularLocation>
</comment>
<comment type="similarity">
    <text evidence="1">Belongs to the class-I aminoacyl-tRNA synthetase family. Glutamate--tRNA ligase type 1 subfamily.</text>
</comment>
<proteinExistence type="inferred from homology"/>
<protein>
    <recommendedName>
        <fullName evidence="1">Glutamate--tRNA ligase</fullName>
        <ecNumber evidence="1">6.1.1.17</ecNumber>
    </recommendedName>
    <alternativeName>
        <fullName evidence="1">Glutamyl-tRNA synthetase</fullName>
        <shortName evidence="1">GluRS</shortName>
    </alternativeName>
</protein>
<organism>
    <name type="scientific">Amoebophilus asiaticus (strain 5a2)</name>
    <dbReference type="NCBI Taxonomy" id="452471"/>
    <lineage>
        <taxon>Bacteria</taxon>
        <taxon>Pseudomonadati</taxon>
        <taxon>Bacteroidota</taxon>
        <taxon>Cytophagia</taxon>
        <taxon>Cytophagales</taxon>
        <taxon>Amoebophilaceae</taxon>
        <taxon>Candidatus Amoebophilus</taxon>
    </lineage>
</organism>
<gene>
    <name evidence="1" type="primary">gltX</name>
    <name type="ordered locus">Aasi_0504</name>
</gene>
<evidence type="ECO:0000255" key="1">
    <source>
        <dbReference type="HAMAP-Rule" id="MF_00022"/>
    </source>
</evidence>
<sequence>MEKPIRVRFAPSPTGALHIGGVRTALYNYLLARKHQGKFILRIEDTDQNRFVPGAEQYIIDTLQWLGIDPDEGIQQGGPFAPYRQSDRKDMYRKYADQLVQAGKAYYAFDTPEELEAMRERLQAAKVASPQYNAISREWMKNSLTLPQEEVTARINAGEPYVIRFKMPHKEIVRFYDQVRGWVKVETSTLDDKVLLKSDGMATYHLANVVDDYLMQISHVIRGEEWLPSAPLHILLYQAFGWEQTMPQFVHLPILLKPEGHGKLSKRDADKHGFPIFPIAWQDPATGNHIEGFREKGYLPEALINFLALLGWSPGGDQELFTKEALVEAFSLERIGKSGVKFDIQKANWFNQQYLRNKTEKELSVYLTSELDKREIAYTTEQAEQICALVKERAIFPQDFWEQGQVFFQAPTTYDAQAIQKRWTSQAHETLAGFVDILPTISPFNAASIKESLADFLKERSIKINEMMPVIRIALMGTTAGPDLMQSIEIIGQKETIRRLRTALRIIVPVGS</sequence>
<name>SYE_AMOA5</name>
<feature type="chain" id="PRO_0000367607" description="Glutamate--tRNA ligase">
    <location>
        <begin position="1"/>
        <end position="512"/>
    </location>
</feature>
<feature type="short sequence motif" description="'HIGH' region" evidence="1">
    <location>
        <begin position="11"/>
        <end position="21"/>
    </location>
</feature>
<feature type="short sequence motif" description="'KMSKS' region" evidence="1">
    <location>
        <begin position="263"/>
        <end position="267"/>
    </location>
</feature>
<feature type="binding site" evidence="1">
    <location>
        <position position="266"/>
    </location>
    <ligand>
        <name>ATP</name>
        <dbReference type="ChEBI" id="CHEBI:30616"/>
    </ligand>
</feature>
<reference key="1">
    <citation type="journal article" date="2010" name="J. Bacteriol.">
        <title>The genome of the amoeba symbiont 'Candidatus Amoebophilus asiaticus' reveals common mechanisms for host cell interaction among amoeba-associated bacteria.</title>
        <authorList>
            <person name="Schmitz-Esser S."/>
            <person name="Tischler P."/>
            <person name="Arnold R."/>
            <person name="Montanaro J."/>
            <person name="Wagner M."/>
            <person name="Rattei T."/>
            <person name="Horn M."/>
        </authorList>
    </citation>
    <scope>NUCLEOTIDE SEQUENCE [LARGE SCALE GENOMIC DNA]</scope>
    <source>
        <strain>5a2</strain>
    </source>
</reference>
<dbReference type="EC" id="6.1.1.17" evidence="1"/>
<dbReference type="EMBL" id="CP001102">
    <property type="protein sequence ID" value="ACE05909.1"/>
    <property type="molecule type" value="Genomic_DNA"/>
</dbReference>
<dbReference type="RefSeq" id="WP_012472674.1">
    <property type="nucleotide sequence ID" value="NC_010830.1"/>
</dbReference>
<dbReference type="SMR" id="B3ERQ7"/>
<dbReference type="STRING" id="452471.Aasi_0504"/>
<dbReference type="KEGG" id="aas:Aasi_0504"/>
<dbReference type="eggNOG" id="COG0008">
    <property type="taxonomic scope" value="Bacteria"/>
</dbReference>
<dbReference type="HOGENOM" id="CLU_015768_6_3_10"/>
<dbReference type="OrthoDB" id="9807503at2"/>
<dbReference type="Proteomes" id="UP000001227">
    <property type="component" value="Chromosome"/>
</dbReference>
<dbReference type="GO" id="GO:0005829">
    <property type="term" value="C:cytosol"/>
    <property type="evidence" value="ECO:0007669"/>
    <property type="project" value="TreeGrafter"/>
</dbReference>
<dbReference type="GO" id="GO:0005524">
    <property type="term" value="F:ATP binding"/>
    <property type="evidence" value="ECO:0007669"/>
    <property type="project" value="UniProtKB-UniRule"/>
</dbReference>
<dbReference type="GO" id="GO:0004818">
    <property type="term" value="F:glutamate-tRNA ligase activity"/>
    <property type="evidence" value="ECO:0007669"/>
    <property type="project" value="UniProtKB-UniRule"/>
</dbReference>
<dbReference type="GO" id="GO:0000049">
    <property type="term" value="F:tRNA binding"/>
    <property type="evidence" value="ECO:0007669"/>
    <property type="project" value="InterPro"/>
</dbReference>
<dbReference type="GO" id="GO:0008270">
    <property type="term" value="F:zinc ion binding"/>
    <property type="evidence" value="ECO:0007669"/>
    <property type="project" value="InterPro"/>
</dbReference>
<dbReference type="GO" id="GO:0006424">
    <property type="term" value="P:glutamyl-tRNA aminoacylation"/>
    <property type="evidence" value="ECO:0007669"/>
    <property type="project" value="UniProtKB-UniRule"/>
</dbReference>
<dbReference type="CDD" id="cd00808">
    <property type="entry name" value="GluRS_core"/>
    <property type="match status" value="1"/>
</dbReference>
<dbReference type="FunFam" id="3.40.50.620:FF:000127">
    <property type="entry name" value="Glutamate--tRNA ligase"/>
    <property type="match status" value="1"/>
</dbReference>
<dbReference type="Gene3D" id="1.10.10.350">
    <property type="match status" value="1"/>
</dbReference>
<dbReference type="Gene3D" id="1.10.1160.10">
    <property type="entry name" value="Glutamyl-trna Synthetase, Domain 2"/>
    <property type="match status" value="1"/>
</dbReference>
<dbReference type="Gene3D" id="3.90.800.10">
    <property type="entry name" value="Glutamyl-tRNA Synthetase, Domain 3"/>
    <property type="match status" value="1"/>
</dbReference>
<dbReference type="Gene3D" id="3.40.50.620">
    <property type="entry name" value="HUPs"/>
    <property type="match status" value="1"/>
</dbReference>
<dbReference type="HAMAP" id="MF_00022">
    <property type="entry name" value="Glu_tRNA_synth_type1"/>
    <property type="match status" value="1"/>
</dbReference>
<dbReference type="InterPro" id="IPR045462">
    <property type="entry name" value="aa-tRNA-synth_I_cd-bd"/>
</dbReference>
<dbReference type="InterPro" id="IPR020751">
    <property type="entry name" value="aa-tRNA-synth_I_codon-bd_sub2"/>
</dbReference>
<dbReference type="InterPro" id="IPR001412">
    <property type="entry name" value="aa-tRNA-synth_I_CS"/>
</dbReference>
<dbReference type="InterPro" id="IPR008925">
    <property type="entry name" value="aa_tRNA-synth_I_cd-bd_sf"/>
</dbReference>
<dbReference type="InterPro" id="IPR004527">
    <property type="entry name" value="Glu-tRNA-ligase_bac/mito"/>
</dbReference>
<dbReference type="InterPro" id="IPR000924">
    <property type="entry name" value="Glu/Gln-tRNA-synth"/>
</dbReference>
<dbReference type="InterPro" id="IPR020058">
    <property type="entry name" value="Glu/Gln-tRNA-synth_Ib_cat-dom"/>
</dbReference>
<dbReference type="InterPro" id="IPR020061">
    <property type="entry name" value="Glu_tRNA_lig_a-bdl"/>
</dbReference>
<dbReference type="InterPro" id="IPR049940">
    <property type="entry name" value="GluQ/Sye"/>
</dbReference>
<dbReference type="InterPro" id="IPR033910">
    <property type="entry name" value="GluRS_core"/>
</dbReference>
<dbReference type="InterPro" id="IPR014729">
    <property type="entry name" value="Rossmann-like_a/b/a_fold"/>
</dbReference>
<dbReference type="NCBIfam" id="TIGR00464">
    <property type="entry name" value="gltX_bact"/>
    <property type="match status" value="1"/>
</dbReference>
<dbReference type="PANTHER" id="PTHR43311">
    <property type="entry name" value="GLUTAMATE--TRNA LIGASE"/>
    <property type="match status" value="1"/>
</dbReference>
<dbReference type="PANTHER" id="PTHR43311:SF2">
    <property type="entry name" value="GLUTAMATE--TRNA LIGASE, MITOCHONDRIAL-RELATED"/>
    <property type="match status" value="1"/>
</dbReference>
<dbReference type="Pfam" id="PF19269">
    <property type="entry name" value="Anticodon_2"/>
    <property type="match status" value="1"/>
</dbReference>
<dbReference type="Pfam" id="PF00749">
    <property type="entry name" value="tRNA-synt_1c"/>
    <property type="match status" value="1"/>
</dbReference>
<dbReference type="PRINTS" id="PR00987">
    <property type="entry name" value="TRNASYNTHGLU"/>
</dbReference>
<dbReference type="SUPFAM" id="SSF48163">
    <property type="entry name" value="An anticodon-binding domain of class I aminoacyl-tRNA synthetases"/>
    <property type="match status" value="1"/>
</dbReference>
<dbReference type="SUPFAM" id="SSF52374">
    <property type="entry name" value="Nucleotidylyl transferase"/>
    <property type="match status" value="1"/>
</dbReference>
<dbReference type="PROSITE" id="PS00178">
    <property type="entry name" value="AA_TRNA_LIGASE_I"/>
    <property type="match status" value="1"/>
</dbReference>
<keyword id="KW-0030">Aminoacyl-tRNA synthetase</keyword>
<keyword id="KW-0067">ATP-binding</keyword>
<keyword id="KW-0963">Cytoplasm</keyword>
<keyword id="KW-0436">Ligase</keyword>
<keyword id="KW-0547">Nucleotide-binding</keyword>
<keyword id="KW-0648">Protein biosynthesis</keyword>
<keyword id="KW-1185">Reference proteome</keyword>
<accession>B3ERQ7</accession>